<feature type="chain" id="PRO_1000119783" description="Chaperone protein DnaK">
    <location>
        <begin position="1"/>
        <end position="636"/>
    </location>
</feature>
<feature type="region of interest" description="Disordered" evidence="2">
    <location>
        <begin position="603"/>
        <end position="636"/>
    </location>
</feature>
<feature type="modified residue" description="Phosphothreonine; by autocatalysis" evidence="1">
    <location>
        <position position="199"/>
    </location>
</feature>
<organism>
    <name type="scientific">Yersinia pseudotuberculosis serotype O:3 (strain YPIII)</name>
    <dbReference type="NCBI Taxonomy" id="502800"/>
    <lineage>
        <taxon>Bacteria</taxon>
        <taxon>Pseudomonadati</taxon>
        <taxon>Pseudomonadota</taxon>
        <taxon>Gammaproteobacteria</taxon>
        <taxon>Enterobacterales</taxon>
        <taxon>Yersiniaceae</taxon>
        <taxon>Yersinia</taxon>
    </lineage>
</organism>
<name>DNAK_YERPY</name>
<dbReference type="EMBL" id="CP000950">
    <property type="protein sequence ID" value="ACA69861.1"/>
    <property type="molecule type" value="Genomic_DNA"/>
</dbReference>
<dbReference type="RefSeq" id="WP_002209248.1">
    <property type="nucleotide sequence ID" value="NZ_CP009792.1"/>
</dbReference>
<dbReference type="SMR" id="B1JL04"/>
<dbReference type="GeneID" id="57974141"/>
<dbReference type="KEGG" id="ypy:YPK_3594"/>
<dbReference type="PATRIC" id="fig|502800.11.peg.4343"/>
<dbReference type="GO" id="GO:0005524">
    <property type="term" value="F:ATP binding"/>
    <property type="evidence" value="ECO:0007669"/>
    <property type="project" value="UniProtKB-UniRule"/>
</dbReference>
<dbReference type="GO" id="GO:0140662">
    <property type="term" value="F:ATP-dependent protein folding chaperone"/>
    <property type="evidence" value="ECO:0007669"/>
    <property type="project" value="InterPro"/>
</dbReference>
<dbReference type="GO" id="GO:0051082">
    <property type="term" value="F:unfolded protein binding"/>
    <property type="evidence" value="ECO:0007669"/>
    <property type="project" value="InterPro"/>
</dbReference>
<dbReference type="CDD" id="cd10234">
    <property type="entry name" value="ASKHA_NBD_HSP70_DnaK-like"/>
    <property type="match status" value="1"/>
</dbReference>
<dbReference type="FunFam" id="2.60.34.10:FF:000014">
    <property type="entry name" value="Chaperone protein DnaK HSP70"/>
    <property type="match status" value="1"/>
</dbReference>
<dbReference type="FunFam" id="3.30.30.30:FF:000003">
    <property type="entry name" value="Heat shock protein 9"/>
    <property type="match status" value="1"/>
</dbReference>
<dbReference type="FunFam" id="1.20.1270.10:FF:000001">
    <property type="entry name" value="Molecular chaperone DnaK"/>
    <property type="match status" value="1"/>
</dbReference>
<dbReference type="FunFam" id="3.30.420.40:FF:000004">
    <property type="entry name" value="Molecular chaperone DnaK"/>
    <property type="match status" value="1"/>
</dbReference>
<dbReference type="FunFam" id="3.90.640.10:FF:000003">
    <property type="entry name" value="Molecular chaperone DnaK"/>
    <property type="match status" value="1"/>
</dbReference>
<dbReference type="Gene3D" id="1.20.1270.10">
    <property type="match status" value="1"/>
</dbReference>
<dbReference type="Gene3D" id="3.30.420.40">
    <property type="match status" value="2"/>
</dbReference>
<dbReference type="Gene3D" id="3.90.640.10">
    <property type="entry name" value="Actin, Chain A, domain 4"/>
    <property type="match status" value="1"/>
</dbReference>
<dbReference type="Gene3D" id="2.60.34.10">
    <property type="entry name" value="Substrate Binding Domain Of DNAk, Chain A, domain 1"/>
    <property type="match status" value="1"/>
</dbReference>
<dbReference type="HAMAP" id="MF_00332">
    <property type="entry name" value="DnaK"/>
    <property type="match status" value="1"/>
</dbReference>
<dbReference type="InterPro" id="IPR043129">
    <property type="entry name" value="ATPase_NBD"/>
</dbReference>
<dbReference type="InterPro" id="IPR012725">
    <property type="entry name" value="Chaperone_DnaK"/>
</dbReference>
<dbReference type="InterPro" id="IPR018181">
    <property type="entry name" value="Heat_shock_70_CS"/>
</dbReference>
<dbReference type="InterPro" id="IPR029048">
    <property type="entry name" value="HSP70_C_sf"/>
</dbReference>
<dbReference type="InterPro" id="IPR029047">
    <property type="entry name" value="HSP70_peptide-bd_sf"/>
</dbReference>
<dbReference type="InterPro" id="IPR013126">
    <property type="entry name" value="Hsp_70_fam"/>
</dbReference>
<dbReference type="NCBIfam" id="NF001413">
    <property type="entry name" value="PRK00290.1"/>
    <property type="match status" value="1"/>
</dbReference>
<dbReference type="NCBIfam" id="NF003520">
    <property type="entry name" value="PRK05183.1"/>
    <property type="match status" value="1"/>
</dbReference>
<dbReference type="NCBIfam" id="TIGR02350">
    <property type="entry name" value="prok_dnaK"/>
    <property type="match status" value="1"/>
</dbReference>
<dbReference type="PANTHER" id="PTHR19375">
    <property type="entry name" value="HEAT SHOCK PROTEIN 70KDA"/>
    <property type="match status" value="1"/>
</dbReference>
<dbReference type="Pfam" id="PF00012">
    <property type="entry name" value="HSP70"/>
    <property type="match status" value="1"/>
</dbReference>
<dbReference type="PRINTS" id="PR00301">
    <property type="entry name" value="HEATSHOCK70"/>
</dbReference>
<dbReference type="SUPFAM" id="SSF53067">
    <property type="entry name" value="Actin-like ATPase domain"/>
    <property type="match status" value="2"/>
</dbReference>
<dbReference type="SUPFAM" id="SSF100934">
    <property type="entry name" value="Heat shock protein 70kD (HSP70), C-terminal subdomain"/>
    <property type="match status" value="1"/>
</dbReference>
<dbReference type="SUPFAM" id="SSF100920">
    <property type="entry name" value="Heat shock protein 70kD (HSP70), peptide-binding domain"/>
    <property type="match status" value="1"/>
</dbReference>
<dbReference type="PROSITE" id="PS00297">
    <property type="entry name" value="HSP70_1"/>
    <property type="match status" value="1"/>
</dbReference>
<dbReference type="PROSITE" id="PS00329">
    <property type="entry name" value="HSP70_2"/>
    <property type="match status" value="1"/>
</dbReference>
<dbReference type="PROSITE" id="PS01036">
    <property type="entry name" value="HSP70_3"/>
    <property type="match status" value="1"/>
</dbReference>
<comment type="function">
    <text evidence="1">Acts as a chaperone.</text>
</comment>
<comment type="induction">
    <text evidence="1">By stress conditions e.g. heat shock.</text>
</comment>
<comment type="similarity">
    <text evidence="1">Belongs to the heat shock protein 70 family.</text>
</comment>
<keyword id="KW-0067">ATP-binding</keyword>
<keyword id="KW-0143">Chaperone</keyword>
<keyword id="KW-0547">Nucleotide-binding</keyword>
<keyword id="KW-0597">Phosphoprotein</keyword>
<keyword id="KW-0346">Stress response</keyword>
<reference key="1">
    <citation type="submission" date="2008-02" db="EMBL/GenBank/DDBJ databases">
        <title>Complete sequence of Yersinia pseudotuberculosis YPIII.</title>
        <authorList>
            <consortium name="US DOE Joint Genome Institute"/>
            <person name="Copeland A."/>
            <person name="Lucas S."/>
            <person name="Lapidus A."/>
            <person name="Glavina del Rio T."/>
            <person name="Dalin E."/>
            <person name="Tice H."/>
            <person name="Bruce D."/>
            <person name="Goodwin L."/>
            <person name="Pitluck S."/>
            <person name="Munk A.C."/>
            <person name="Brettin T."/>
            <person name="Detter J.C."/>
            <person name="Han C."/>
            <person name="Tapia R."/>
            <person name="Schmutz J."/>
            <person name="Larimer F."/>
            <person name="Land M."/>
            <person name="Hauser L."/>
            <person name="Challacombe J.F."/>
            <person name="Green L."/>
            <person name="Lindler L.E."/>
            <person name="Nikolich M.P."/>
            <person name="Richardson P."/>
        </authorList>
    </citation>
    <scope>NUCLEOTIDE SEQUENCE [LARGE SCALE GENOMIC DNA]</scope>
    <source>
        <strain>YPIII</strain>
    </source>
</reference>
<gene>
    <name evidence="1" type="primary">dnaK</name>
    <name type="ordered locus">YPK_3594</name>
</gene>
<evidence type="ECO:0000255" key="1">
    <source>
        <dbReference type="HAMAP-Rule" id="MF_00332"/>
    </source>
</evidence>
<evidence type="ECO:0000256" key="2">
    <source>
        <dbReference type="SAM" id="MobiDB-lite"/>
    </source>
</evidence>
<sequence>MGKIIGIDLGTTNSCVAIMDGTKARVLENSEGDRTTPSIIAYTQDGETLVGQPAKRQAVTNPQNTLFAIKRLIGRRFQDEEAQRDKDIMPYKIIAADNGDAWLEVKGQKMAPPQISAEVLKKMKKTAEDYLGEPVTEAVITVPAYFNDAQRQATKDAGRIAGLEVKRIINEPTAAALAYGLDKEVGNRTIAVYDLGGGTFDISIIEIDEVDGEKTFEVLATNGDTHLGGEDFDSRLINYLVEEFKKDQGMDLRTDPLAMQRLKEAAEKAKIELSSAQQTDVNLPYITADGSGPKHMNIKVTRAKLESLVEDLVNRSIEPLKVALQDAGLSVSDIQDVILVGGQTRMPMVQKKVADFFGKEPRKDVNPDEAVAIGAAVQGGVLSGEVKDVLLLDVTPLSLGIETMGGVMTPLITKNTTIPTKHSQVFSTAEDNQSAVTIHVLQGERKRAQDNKSLGQFNLDGIQPAPRGMAQIEVTFDIDADGILHVSAKDKNTGREQKITIKASSGLNEEEIQKMVRDAEANAEADRKFEELVQTRNQADHLIHGTRKQLEEAGDKLPAEDKTAIEEAMKGLEAALKGEDKAEIEAKTQALVQVSGKLLEMAQQQQAAAGGDAGDTSAKKEDDVVDAEFEEVKDKK</sequence>
<proteinExistence type="inferred from homology"/>
<protein>
    <recommendedName>
        <fullName evidence="1">Chaperone protein DnaK</fullName>
    </recommendedName>
    <alternativeName>
        <fullName evidence="1">HSP70</fullName>
    </alternativeName>
    <alternativeName>
        <fullName evidence="1">Heat shock 70 kDa protein</fullName>
    </alternativeName>
    <alternativeName>
        <fullName evidence="1">Heat shock protein 70</fullName>
    </alternativeName>
</protein>
<accession>B1JL04</accession>